<comment type="function">
    <text>Alpha-2 adrenergic receptors mediate the catecholamine-induced inhibition of adenylate cyclase through the action of G proteins.</text>
</comment>
<comment type="subunit">
    <text evidence="2">Interacts with RAB26. Interacts with PPP1R9B.</text>
</comment>
<comment type="subcellular location">
    <subcellularLocation>
        <location>Cell membrane</location>
        <topology>Multi-pass membrane protein</topology>
    </subcellularLocation>
</comment>
<comment type="similarity">
    <text evidence="4">Belongs to the G-protein coupled receptor 1 family. Adrenergic receptor subfamily. ADRA2B sub-subfamily.</text>
</comment>
<proteinExistence type="inferred from homology"/>
<name>ADA2B_CAVPO</name>
<keyword id="KW-1003">Cell membrane</keyword>
<keyword id="KW-1015">Disulfide bond</keyword>
<keyword id="KW-0297">G-protein coupled receptor</keyword>
<keyword id="KW-0449">Lipoprotein</keyword>
<keyword id="KW-0472">Membrane</keyword>
<keyword id="KW-0564">Palmitate</keyword>
<keyword id="KW-0675">Receptor</keyword>
<keyword id="KW-1185">Reference proteome</keyword>
<keyword id="KW-0807">Transducer</keyword>
<keyword id="KW-0812">Transmembrane</keyword>
<keyword id="KW-1133">Transmembrane helix</keyword>
<sequence length="448" mass="49597">MDHQEPYSVQATAAIAAVITFLILFTIFGNALVILAVLTSRSLPAPQNLFLVSLAAADILVATLIIPFSLANELLGYWYFWRTWCEVYLALDVLFCTSSIVHLCAISLDRYWAVSRALEYNSKRTPRRIKCIILTVWLIAAVISLPPLIYKGDQGPSPRGPQCKINQEAWYILASSIGSFFAPCLIMILVYLRIYLIAKRSHRRGPRAKGGPGEGESKESRPSPGGAPASAKVPPLASPLSSTGEANGHPKPTGEKEEGETSEDPGARTLPPSWAALPTSGQGQKKAVVLAPAEEEAEEEEEEEGDECEPQAAPGLPASMCSPSLQQPQGSRVLATLRGQVLLGRGVGAVDGQWWRRRTQMTREKRFTFVLAVVIGVFVLCWFPFFFTYSLGAICPQHCKVPHGLFQFFFWIGYCNSSLNPVIYTIFNQDFRRAFRRILCRQWTQTAW</sequence>
<reference key="1">
    <citation type="journal article" date="1996" name="Biochem. Pharmacol.">
        <title>Heterologous expression of the cloned guinea pig alpha 2A, alpha 2B, and alpha 2C adrenoceptor subtypes. Radioligand binding and functional coupling to a cAMP-responsive reporter gene.</title>
        <authorList>
            <person name="Svensson S.P."/>
            <person name="Bailey T.J."/>
            <person name="Porter A.C."/>
            <person name="Richman J.G."/>
            <person name="Regan J.W."/>
        </authorList>
    </citation>
    <scope>NUCLEOTIDE SEQUENCE [GENOMIC DNA]</scope>
    <source>
        <strain>Hartley</strain>
    </source>
</reference>
<feature type="chain" id="PRO_0000069087" description="Alpha-2B adrenergic receptor">
    <location>
        <begin position="1"/>
        <end position="448"/>
    </location>
</feature>
<feature type="topological domain" description="Extracellular" evidence="1">
    <location>
        <begin position="1"/>
        <end position="12"/>
    </location>
</feature>
<feature type="transmembrane region" description="Helical; Name=1" evidence="1">
    <location>
        <begin position="13"/>
        <end position="38"/>
    </location>
</feature>
<feature type="topological domain" description="Cytoplasmic" evidence="1">
    <location>
        <begin position="39"/>
        <end position="49"/>
    </location>
</feature>
<feature type="transmembrane region" description="Helical; Name=2" evidence="1">
    <location>
        <begin position="50"/>
        <end position="75"/>
    </location>
</feature>
<feature type="topological domain" description="Extracellular" evidence="1">
    <location>
        <begin position="76"/>
        <end position="85"/>
    </location>
</feature>
<feature type="transmembrane region" description="Helical; Name=3" evidence="1">
    <location>
        <begin position="86"/>
        <end position="108"/>
    </location>
</feature>
<feature type="topological domain" description="Cytoplasmic" evidence="1">
    <location>
        <begin position="109"/>
        <end position="130"/>
    </location>
</feature>
<feature type="transmembrane region" description="Helical; Name=4" evidence="1">
    <location>
        <begin position="131"/>
        <end position="153"/>
    </location>
</feature>
<feature type="topological domain" description="Extracellular" evidence="1">
    <location>
        <begin position="154"/>
        <end position="168"/>
    </location>
</feature>
<feature type="transmembrane region" description="Helical; Name=5" evidence="1">
    <location>
        <begin position="169"/>
        <end position="192"/>
    </location>
</feature>
<feature type="topological domain" description="Cytoplasmic" evidence="1">
    <location>
        <begin position="193"/>
        <end position="370"/>
    </location>
</feature>
<feature type="transmembrane region" description="Helical; Name=6" evidence="1">
    <location>
        <begin position="371"/>
        <end position="394"/>
    </location>
</feature>
<feature type="topological domain" description="Extracellular" evidence="1">
    <location>
        <begin position="395"/>
        <end position="403"/>
    </location>
</feature>
<feature type="transmembrane region" description="Helical; Name=7" evidence="1">
    <location>
        <begin position="404"/>
        <end position="427"/>
    </location>
</feature>
<feature type="topological domain" description="Cytoplasmic" evidence="1">
    <location>
        <begin position="428"/>
        <end position="448"/>
    </location>
</feature>
<feature type="region of interest" description="Disordered" evidence="5">
    <location>
        <begin position="203"/>
        <end position="326"/>
    </location>
</feature>
<feature type="compositionally biased region" description="Acidic residues" evidence="5">
    <location>
        <begin position="293"/>
        <end position="309"/>
    </location>
</feature>
<feature type="site" description="Implicated in ligand binding" evidence="1">
    <location>
        <position position="92"/>
    </location>
</feature>
<feature type="site" description="Implicated in catechol agonist binding" evidence="1">
    <location>
        <position position="175"/>
    </location>
</feature>
<feature type="site" description="Implicated in catechol agonist binding" evidence="1">
    <location>
        <position position="179"/>
    </location>
</feature>
<feature type="lipid moiety-binding region" description="S-palmitoyl cysteine" evidence="3">
    <location>
        <position position="440"/>
    </location>
</feature>
<feature type="disulfide bond" evidence="4">
    <location>
        <begin position="85"/>
        <end position="163"/>
    </location>
</feature>
<organism>
    <name type="scientific">Cavia porcellus</name>
    <name type="common">Guinea pig</name>
    <dbReference type="NCBI Taxonomy" id="10141"/>
    <lineage>
        <taxon>Eukaryota</taxon>
        <taxon>Metazoa</taxon>
        <taxon>Chordata</taxon>
        <taxon>Craniata</taxon>
        <taxon>Vertebrata</taxon>
        <taxon>Euteleostomi</taxon>
        <taxon>Mammalia</taxon>
        <taxon>Eutheria</taxon>
        <taxon>Euarchontoglires</taxon>
        <taxon>Glires</taxon>
        <taxon>Rodentia</taxon>
        <taxon>Hystricomorpha</taxon>
        <taxon>Caviidae</taxon>
        <taxon>Cavia</taxon>
    </lineage>
</organism>
<protein>
    <recommendedName>
        <fullName>Alpha-2B adrenergic receptor</fullName>
    </recommendedName>
    <alternativeName>
        <fullName>Alpha-2B adrenoreceptor</fullName>
        <shortName>Alpha-2B adrenoceptor</shortName>
        <shortName>Alpha-2BAR</shortName>
    </alternativeName>
</protein>
<accession>Q60475</accession>
<dbReference type="EMBL" id="U25723">
    <property type="protein sequence ID" value="AAA67075.1"/>
    <property type="molecule type" value="Genomic_DNA"/>
</dbReference>
<dbReference type="SMR" id="Q60475"/>
<dbReference type="FunCoup" id="Q60475">
    <property type="interactions" value="1004"/>
</dbReference>
<dbReference type="STRING" id="10141.ENSCPOP00000015298"/>
<dbReference type="eggNOG" id="KOG3656">
    <property type="taxonomic scope" value="Eukaryota"/>
</dbReference>
<dbReference type="InParanoid" id="Q60475"/>
<dbReference type="Proteomes" id="UP000005447">
    <property type="component" value="Unassembled WGS sequence"/>
</dbReference>
<dbReference type="GO" id="GO:0005886">
    <property type="term" value="C:plasma membrane"/>
    <property type="evidence" value="ECO:0007669"/>
    <property type="project" value="UniProtKB-SubCell"/>
</dbReference>
<dbReference type="GO" id="GO:0004938">
    <property type="term" value="F:alpha2-adrenergic receptor activity"/>
    <property type="evidence" value="ECO:0007669"/>
    <property type="project" value="InterPro"/>
</dbReference>
<dbReference type="GO" id="GO:0051379">
    <property type="term" value="F:epinephrine binding"/>
    <property type="evidence" value="ECO:0007669"/>
    <property type="project" value="TreeGrafter"/>
</dbReference>
<dbReference type="GO" id="GO:0030168">
    <property type="term" value="P:platelet activation"/>
    <property type="evidence" value="ECO:0007669"/>
    <property type="project" value="InterPro"/>
</dbReference>
<dbReference type="GO" id="GO:0006940">
    <property type="term" value="P:regulation of smooth muscle contraction"/>
    <property type="evidence" value="ECO:0007669"/>
    <property type="project" value="InterPro"/>
</dbReference>
<dbReference type="GO" id="GO:0019229">
    <property type="term" value="P:regulation of vasoconstriction"/>
    <property type="evidence" value="ECO:0007669"/>
    <property type="project" value="InterPro"/>
</dbReference>
<dbReference type="CDD" id="cd15321">
    <property type="entry name" value="7tmA_alpha2B_AR"/>
    <property type="match status" value="1"/>
</dbReference>
<dbReference type="FunFam" id="1.20.1070.10:FF:000185">
    <property type="entry name" value="Alpha-2B adrenergic receptor"/>
    <property type="match status" value="1"/>
</dbReference>
<dbReference type="FunFam" id="1.20.1070.10:FF:000100">
    <property type="entry name" value="alpha-2B adrenergic receptor"/>
    <property type="match status" value="1"/>
</dbReference>
<dbReference type="Gene3D" id="1.20.1070.10">
    <property type="entry name" value="Rhodopsin 7-helix transmembrane proteins"/>
    <property type="match status" value="2"/>
</dbReference>
<dbReference type="InterPro" id="IPR002233">
    <property type="entry name" value="ADR_fam"/>
</dbReference>
<dbReference type="InterPro" id="IPR000207">
    <property type="entry name" value="ADRA2B_rcpt"/>
</dbReference>
<dbReference type="InterPro" id="IPR000276">
    <property type="entry name" value="GPCR_Rhodpsn"/>
</dbReference>
<dbReference type="InterPro" id="IPR017452">
    <property type="entry name" value="GPCR_Rhodpsn_7TM"/>
</dbReference>
<dbReference type="PANTHER" id="PTHR24248">
    <property type="entry name" value="ADRENERGIC RECEPTOR-RELATED G-PROTEIN COUPLED RECEPTOR"/>
    <property type="match status" value="1"/>
</dbReference>
<dbReference type="PANTHER" id="PTHR24248:SF130">
    <property type="entry name" value="ALPHA-2B ADRENERGIC RECEPTOR"/>
    <property type="match status" value="1"/>
</dbReference>
<dbReference type="Pfam" id="PF00001">
    <property type="entry name" value="7tm_1"/>
    <property type="match status" value="1"/>
</dbReference>
<dbReference type="PRINTS" id="PR01103">
    <property type="entry name" value="ADRENERGICR"/>
</dbReference>
<dbReference type="PRINTS" id="PR00559">
    <property type="entry name" value="ADRENRGCA2BR"/>
</dbReference>
<dbReference type="PRINTS" id="PR00237">
    <property type="entry name" value="GPCRRHODOPSN"/>
</dbReference>
<dbReference type="SMART" id="SM01381">
    <property type="entry name" value="7TM_GPCR_Srsx"/>
    <property type="match status" value="1"/>
</dbReference>
<dbReference type="SUPFAM" id="SSF81321">
    <property type="entry name" value="Family A G protein-coupled receptor-like"/>
    <property type="match status" value="1"/>
</dbReference>
<dbReference type="PROSITE" id="PS00237">
    <property type="entry name" value="G_PROTEIN_RECEP_F1_1"/>
    <property type="match status" value="1"/>
</dbReference>
<dbReference type="PROSITE" id="PS50262">
    <property type="entry name" value="G_PROTEIN_RECEP_F1_2"/>
    <property type="match status" value="1"/>
</dbReference>
<gene>
    <name type="primary">ADRA2B</name>
</gene>
<evidence type="ECO:0000250" key="1"/>
<evidence type="ECO:0000250" key="2">
    <source>
        <dbReference type="UniProtKB" id="P18089"/>
    </source>
</evidence>
<evidence type="ECO:0000255" key="3"/>
<evidence type="ECO:0000255" key="4">
    <source>
        <dbReference type="PROSITE-ProRule" id="PRU00521"/>
    </source>
</evidence>
<evidence type="ECO:0000256" key="5">
    <source>
        <dbReference type="SAM" id="MobiDB-lite"/>
    </source>
</evidence>